<accession>Q9PRZ3</accession>
<name>TKNG_ONCMY</name>
<comment type="function">
    <text evidence="4 5 6 7">Tachykinins are active peptides which excite neurons, evoke behavioral responses, and contract (directly or indirectly) many smooth muscles. Is a potent vasoconstrictor and secretagogue that plays a regulatory role in the central control of ventilation, in particular, the heart rate variability (HRV).</text>
</comment>
<comment type="subcellular location">
    <subcellularLocation>
        <location evidence="1">Secreted</location>
    </subcellularLocation>
</comment>
<comment type="similarity">
    <text evidence="2">Belongs to the tachykinin family.</text>
</comment>
<protein>
    <recommendedName>
        <fullName evidence="8">Neuropeptide gamma</fullName>
        <shortName evidence="8">NPgamma</shortName>
    </recommendedName>
</protein>
<reference evidence="9" key="1">
    <citation type="journal article" date="1993" name="Am. J. Physiol.">
        <title>Primary structures and effects on gastrointestinal motility of tachykinins from the rainbow trout.</title>
        <authorList>
            <person name="Jensen J."/>
            <person name="Olson K.R."/>
            <person name="Conlon J.M."/>
        </authorList>
    </citation>
    <scope>PROTEIN SEQUENCE</scope>
    <scope>FUNCTION</scope>
    <source>
        <tissue evidence="7">Intestine</tissue>
    </source>
</reference>
<reference evidence="9" key="2">
    <citation type="journal article" date="2005" name="J. Pept. Res.">
        <title>Structure-activity relationship of neuropeptide gamma derived from mammalian and fish.</title>
        <authorList>
            <person name="Kim E.J."/>
            <person name="Kim C.H."/>
            <person name="Seo J.K."/>
            <person name="Go H.J."/>
            <person name="Lee S."/>
            <person name="Takano Y."/>
            <person name="Chung J.K."/>
            <person name="Hong Y.K."/>
            <person name="Park N.G."/>
        </authorList>
    </citation>
    <scope>FUNCTION</scope>
    <scope>SYNTHESIS OF 1-21</scope>
</reference>
<reference evidence="9" key="3">
    <citation type="journal article" date="2007" name="J. Exp. Biol.">
        <title>Ventilatory and cardiovascular actions of centrally administered trout tachykinins in the unanesthetized trout.</title>
        <authorList>
            <person name="Le Mevel J.C."/>
            <person name="Lancien F."/>
            <person name="Mimassi N."/>
            <person name="Conlon J.M."/>
        </authorList>
    </citation>
    <scope>FUNCTION</scope>
</reference>
<reference evidence="9" key="4">
    <citation type="journal article" date="2009" name="Ann. N. Y. Acad. Sci.">
        <title>Central effects of trout tachykinins on heart rate variability in trout.</title>
        <authorList>
            <person name="Lancien F."/>
            <person name="Mimassi N."/>
            <person name="Conlon J.M."/>
            <person name="Le Mevel J.C."/>
        </authorList>
    </citation>
    <scope>FUNCTION</scope>
</reference>
<sequence length="21" mass="2385">SSANPQITRKRHKINSFVGLM</sequence>
<organism>
    <name type="scientific">Oncorhynchus mykiss</name>
    <name type="common">Rainbow trout</name>
    <name type="synonym">Salmo gairdneri</name>
    <dbReference type="NCBI Taxonomy" id="8022"/>
    <lineage>
        <taxon>Eukaryota</taxon>
        <taxon>Metazoa</taxon>
        <taxon>Chordata</taxon>
        <taxon>Craniata</taxon>
        <taxon>Vertebrata</taxon>
        <taxon>Euteleostomi</taxon>
        <taxon>Actinopterygii</taxon>
        <taxon>Neopterygii</taxon>
        <taxon>Teleostei</taxon>
        <taxon>Protacanthopterygii</taxon>
        <taxon>Salmoniformes</taxon>
        <taxon>Salmonidae</taxon>
        <taxon>Salmoninae</taxon>
        <taxon>Oncorhynchus</taxon>
    </lineage>
</organism>
<evidence type="ECO:0000250" key="1">
    <source>
        <dbReference type="UniProtKB" id="P25421"/>
    </source>
</evidence>
<evidence type="ECO:0000255" key="2"/>
<evidence type="ECO:0000256" key="3">
    <source>
        <dbReference type="SAM" id="MobiDB-lite"/>
    </source>
</evidence>
<evidence type="ECO:0000269" key="4">
    <source>
    </source>
</evidence>
<evidence type="ECO:0000269" key="5">
    <source>
    </source>
</evidence>
<evidence type="ECO:0000269" key="6">
    <source>
    </source>
</evidence>
<evidence type="ECO:0000269" key="7">
    <source>
    </source>
</evidence>
<evidence type="ECO:0000303" key="8">
    <source>
    </source>
</evidence>
<evidence type="ECO:0000305" key="9"/>
<keyword id="KW-0027">Amidation</keyword>
<keyword id="KW-0903">Direct protein sequencing</keyword>
<keyword id="KW-0527">Neuropeptide</keyword>
<keyword id="KW-0529">Neurotransmitter</keyword>
<keyword id="KW-0964">Secreted</keyword>
<dbReference type="Proteomes" id="UP000694395">
    <property type="component" value="Unplaced"/>
</dbReference>
<dbReference type="GO" id="GO:0005576">
    <property type="term" value="C:extracellular region"/>
    <property type="evidence" value="ECO:0007669"/>
    <property type="project" value="UniProtKB-SubCell"/>
</dbReference>
<dbReference type="GO" id="GO:0045202">
    <property type="term" value="C:synapse"/>
    <property type="evidence" value="ECO:0007669"/>
    <property type="project" value="GOC"/>
</dbReference>
<dbReference type="GO" id="GO:0007268">
    <property type="term" value="P:chemical synaptic transmission"/>
    <property type="evidence" value="ECO:0007669"/>
    <property type="project" value="UniProtKB-KW"/>
</dbReference>
<dbReference type="GO" id="GO:0007218">
    <property type="term" value="P:neuropeptide signaling pathway"/>
    <property type="evidence" value="ECO:0007669"/>
    <property type="project" value="UniProtKB-KW"/>
</dbReference>
<dbReference type="GO" id="GO:0002027">
    <property type="term" value="P:regulation of heart rate"/>
    <property type="evidence" value="ECO:0000314"/>
    <property type="project" value="UniProtKB"/>
</dbReference>
<dbReference type="GO" id="GO:0006940">
    <property type="term" value="P:regulation of smooth muscle contraction"/>
    <property type="evidence" value="ECO:0000314"/>
    <property type="project" value="UniProtKB"/>
</dbReference>
<dbReference type="InterPro" id="IPR013055">
    <property type="entry name" value="Tachy_Neuro_lke_CS"/>
</dbReference>
<dbReference type="PROSITE" id="PS00267">
    <property type="entry name" value="TACHYKININ"/>
    <property type="match status" value="1"/>
</dbReference>
<feature type="peptide" id="PRO_0000423411" description="Neuropeptide gamma" evidence="7">
    <location>
        <begin position="1"/>
        <end position="21"/>
    </location>
</feature>
<feature type="region of interest" description="Disordered" evidence="3">
    <location>
        <begin position="1"/>
        <end position="21"/>
    </location>
</feature>
<feature type="modified residue" description="Methionine amide" evidence="1">
    <location>
        <position position="21"/>
    </location>
</feature>
<proteinExistence type="evidence at protein level"/>